<accession>P0DV03</accession>
<organism>
    <name type="scientific">Radianthus crispa</name>
    <name type="common">Leathery sea anemone</name>
    <name type="synonym">Heteractis crispa</name>
    <dbReference type="NCBI Taxonomy" id="3122430"/>
    <lineage>
        <taxon>Eukaryota</taxon>
        <taxon>Metazoa</taxon>
        <taxon>Cnidaria</taxon>
        <taxon>Anthozoa</taxon>
        <taxon>Hexacorallia</taxon>
        <taxon>Actiniaria</taxon>
        <taxon>Stichodactylidae</taxon>
        <taxon>Radianthus</taxon>
    </lineage>
</organism>
<evidence type="ECO:0000250" key="1">
    <source>
        <dbReference type="UniProtKB" id="P00974"/>
    </source>
</evidence>
<evidence type="ECO:0000250" key="2">
    <source>
        <dbReference type="UniProtKB" id="P31713"/>
    </source>
</evidence>
<evidence type="ECO:0000255" key="3">
    <source>
        <dbReference type="PROSITE-ProRule" id="PRU00031"/>
    </source>
</evidence>
<evidence type="ECO:0000269" key="4">
    <source>
    </source>
</evidence>
<evidence type="ECO:0000269" key="5">
    <source>
    </source>
</evidence>
<evidence type="ECO:0000269" key="6">
    <source ref="3"/>
</evidence>
<evidence type="ECO:0000303" key="7">
    <source ref="3"/>
</evidence>
<evidence type="ECO:0000305" key="8"/>
<reference key="1">
    <citation type="journal article" date="2012" name="Peptides">
        <title>A new multigene superfamily of Kunitz-type protease inhibitors from sea anemone Heteractis crispa.</title>
        <authorList>
            <person name="Isaeva M.P."/>
            <person name="Chausova V.E."/>
            <person name="Zelepuga E.A."/>
            <person name="Guzev K.V."/>
            <person name="Tabakmakher V.M."/>
            <person name="Monastyrnaya M.M."/>
            <person name="Kozlovskaya E.P."/>
        </authorList>
    </citation>
    <scope>NUCLEOTIDE SEQUENCE [MRNA]</scope>
    <scope>3D-STRUCTURE MODELING</scope>
</reference>
<reference key="2">
    <citation type="journal article" date="2015" name="Dokl. Biochem. Biophys.">
        <title>Analgesic effect of novel Kunitz-type polypeptides of the sea anemone Heteractis crispa.</title>
        <authorList>
            <person name="Tabakmakher V.M."/>
            <person name="Sintsova O.V."/>
            <person name="Krivoshapko O.N."/>
            <person name="Zelepuga E.A."/>
            <person name="Monastyrnaya M.M."/>
            <person name="Kozlovskaya E.P."/>
        </authorList>
    </citation>
    <scope>FUNCTION</scope>
</reference>
<reference key="3">
    <citation type="journal article" date="2017" name="Russ. J. Bioorg. Chem.">
        <title>Kunitz-type peptides of the sea anemone Heteractis crispa: potential anti-inflammatory compounds.</title>
        <authorList>
            <person name="Sintsovaa O.V."/>
            <person name="Pislyagina E.A."/>
            <person name="Gladkikha I.N."/>
            <person name="Monastyrnayaa M.M."/>
            <person name="Menchinskayaa E.S."/>
            <person name="Leychenkoa E.V."/>
            <person name="Aminina D.L."/>
            <person name="Kozlovskaya E.P."/>
        </authorList>
    </citation>
    <scope>FUNCTION</scope>
    <scope>RECOMBINANT EXPRESSION</scope>
</reference>
<reference key="4">
    <citation type="journal article" date="2021" name="Biomedicines">
        <title>Sea anemone kunitz-type peptides demonstrate neuroprotective activity in the 6-hydroxydopamine induced neurotoxicity model.</title>
        <authorList>
            <person name="Sintsova O."/>
            <person name="Gladkikh I."/>
            <person name="Monastyrnaya M."/>
            <person name="Tabakmakher V."/>
            <person name="Yurchenko E."/>
            <person name="Menchinskaya E."/>
            <person name="Pislyagin E."/>
            <person name="Andreev Y."/>
            <person name="Kozlov S."/>
            <person name="Peigneur S."/>
            <person name="Tytgat J."/>
            <person name="Aminin D."/>
            <person name="Kozlovskaya E."/>
            <person name="Leychenko E."/>
        </authorList>
    </citation>
    <scope>FUNCTION</scope>
    <scope>RECOMBINANT EXPRESSION</scope>
</reference>
<name>VKT2M_RADCR</name>
<sequence length="56" mass="6157">GSICLEPKVVGPCTAYLRRFYFDSETGKCTPFIYGGCEGNGNNFETLRACRAICRA</sequence>
<protein>
    <recommendedName>
        <fullName evidence="8">PI-stichotoxin-Hcr2m</fullName>
        <shortName evidence="8">PI-SHTX-Hcr2m</shortName>
    </recommendedName>
    <alternativeName>
        <fullName evidence="7">Kunitz-type serine protease inhibitor HCGS1.10</fullName>
    </alternativeName>
</protein>
<proteinExistence type="inferred from homology"/>
<dbReference type="SMR" id="P0DV03"/>
<dbReference type="GO" id="GO:0005615">
    <property type="term" value="C:extracellular space"/>
    <property type="evidence" value="ECO:0007669"/>
    <property type="project" value="TreeGrafter"/>
</dbReference>
<dbReference type="GO" id="GO:0042151">
    <property type="term" value="C:nematocyst"/>
    <property type="evidence" value="ECO:0007669"/>
    <property type="project" value="UniProtKB-SubCell"/>
</dbReference>
<dbReference type="GO" id="GO:0099106">
    <property type="term" value="F:ion channel regulator activity"/>
    <property type="evidence" value="ECO:0007669"/>
    <property type="project" value="UniProtKB-KW"/>
</dbReference>
<dbReference type="GO" id="GO:0004867">
    <property type="term" value="F:serine-type endopeptidase inhibitor activity"/>
    <property type="evidence" value="ECO:0007669"/>
    <property type="project" value="UniProtKB-KW"/>
</dbReference>
<dbReference type="GO" id="GO:0090729">
    <property type="term" value="F:toxin activity"/>
    <property type="evidence" value="ECO:0007669"/>
    <property type="project" value="UniProtKB-KW"/>
</dbReference>
<dbReference type="CDD" id="cd22618">
    <property type="entry name" value="Kunitz_SHPI"/>
    <property type="match status" value="1"/>
</dbReference>
<dbReference type="FunFam" id="4.10.410.10:FF:000021">
    <property type="entry name" value="Serine protease inhibitor, putative"/>
    <property type="match status" value="1"/>
</dbReference>
<dbReference type="Gene3D" id="4.10.410.10">
    <property type="entry name" value="Pancreatic trypsin inhibitor Kunitz domain"/>
    <property type="match status" value="1"/>
</dbReference>
<dbReference type="InterPro" id="IPR002223">
    <property type="entry name" value="Kunitz_BPTI"/>
</dbReference>
<dbReference type="InterPro" id="IPR036880">
    <property type="entry name" value="Kunitz_BPTI_sf"/>
</dbReference>
<dbReference type="InterPro" id="IPR020901">
    <property type="entry name" value="Prtase_inh_Kunz-CS"/>
</dbReference>
<dbReference type="InterPro" id="IPR050098">
    <property type="entry name" value="TFPI/VKTCI-like"/>
</dbReference>
<dbReference type="PANTHER" id="PTHR10083:SF374">
    <property type="entry name" value="BPTI_KUNITZ INHIBITOR DOMAIN-CONTAINING PROTEIN"/>
    <property type="match status" value="1"/>
</dbReference>
<dbReference type="PANTHER" id="PTHR10083">
    <property type="entry name" value="KUNITZ-TYPE PROTEASE INHIBITOR-RELATED"/>
    <property type="match status" value="1"/>
</dbReference>
<dbReference type="Pfam" id="PF00014">
    <property type="entry name" value="Kunitz_BPTI"/>
    <property type="match status" value="1"/>
</dbReference>
<dbReference type="PRINTS" id="PR00759">
    <property type="entry name" value="BASICPTASE"/>
</dbReference>
<dbReference type="SMART" id="SM00131">
    <property type="entry name" value="KU"/>
    <property type="match status" value="1"/>
</dbReference>
<dbReference type="SUPFAM" id="SSF57362">
    <property type="entry name" value="BPTI-like"/>
    <property type="match status" value="1"/>
</dbReference>
<dbReference type="PROSITE" id="PS00280">
    <property type="entry name" value="BPTI_KUNITZ_1"/>
    <property type="match status" value="1"/>
</dbReference>
<dbReference type="PROSITE" id="PS50279">
    <property type="entry name" value="BPTI_KUNITZ_2"/>
    <property type="match status" value="1"/>
</dbReference>
<feature type="chain" id="PRO_0000454104" description="PI-stichotoxin-Hcr2m" evidence="8">
    <location>
        <begin position="1"/>
        <end position="56"/>
    </location>
</feature>
<feature type="domain" description="BPTI/Kunitz inhibitor" evidence="3">
    <location>
        <begin position="4"/>
        <end position="54"/>
    </location>
</feature>
<feature type="site" description="Reactive bond for trypsin" evidence="1">
    <location>
        <begin position="14"/>
        <end position="15"/>
    </location>
</feature>
<feature type="disulfide bond" evidence="2">
    <location>
        <begin position="4"/>
        <end position="54"/>
    </location>
</feature>
<feature type="disulfide bond" evidence="2">
    <location>
        <begin position="13"/>
        <end position="37"/>
    </location>
</feature>
<feature type="disulfide bond" evidence="2">
    <location>
        <begin position="29"/>
        <end position="50"/>
    </location>
</feature>
<comment type="function">
    <text evidence="4 5 6">This recombinant serine protease inhibitor inhibits trypsin (Ki=210 nM) (Ref.3). In contrast to other sea anemone serine protease inhibitors, it does not significantly blocks histamine influence on intracellular calcium concentration in murine bone marrow-derived macrophages (tested at 1 and 10 uM) (Ref.3). In vitro, it shows cytoprotective activity in the oxidative stress agent 6-hydroxydopamine (6-OHDA)-induced neurotoxicity model (PubMed:33802055). In this model, it decreases reactive oxygen species (ROS) levels, and increases cell viability in a correlated manner (PubMed:33802055). It is possible that the observed effect is due to the ability of this peptides to act as free-radical scavenger (PubMed:33802055). In vivo, it shows analgesic activity, since it increases hot plate and tail flick withdrawal latencies, when using a mice thermal pain stimulation model (PubMed:25937220).</text>
</comment>
<comment type="subcellular location">
    <subcellularLocation>
        <location evidence="8">Secreted</location>
    </subcellularLocation>
    <subcellularLocation>
        <location evidence="8">Nematocyst</location>
    </subcellularLocation>
</comment>
<comment type="miscellaneous">
    <text evidence="5">Negative results: has no activity on Kv1.1/KCNA1, Kv1.2/KCNA2, Kv1.3/KCNA3, Kv1.4/KCNA4, Kv1.5/KCNA5, Kv1.6/KCNA6, Shaker, Kv11.1/KCNH2/ERG1 potassium channels and on TRPV1, the capsaicin receptors.</text>
</comment>
<comment type="miscellaneous">
    <text evidence="8">A synonymy between H.magnifica and R.crispa is controversial.</text>
</comment>
<comment type="similarity">
    <text evidence="8">Belongs to the venom Kunitz-type family. Sea anemone type 2 potassium channel toxin subfamily.</text>
</comment>
<keyword id="KW-1015">Disulfide bond</keyword>
<keyword id="KW-0872">Ion channel impairing toxin</keyword>
<keyword id="KW-0166">Nematocyst</keyword>
<keyword id="KW-0646">Protease inhibitor</keyword>
<keyword id="KW-0964">Secreted</keyword>
<keyword id="KW-0722">Serine protease inhibitor</keyword>
<keyword id="KW-0800">Toxin</keyword>